<name>TX72E_SCOMU</name>
<protein>
    <recommendedName>
        <fullName evidence="1">Kappa-scoloptoxin(07)-Ssm2e</fullName>
        <shortName evidence="1">Kappa-SLPTX(07)-Ssm2e</shortName>
    </recommendedName>
    <alternativeName>
        <fullName evidence="3">Kappa-scoloptoxin-Ssm2e</fullName>
        <shortName evidence="3">Kappa-SLPTX-Ssm2e</shortName>
    </alternativeName>
</protein>
<comment type="function">
    <text evidence="1">Inhibits voltage-gated potassium channels.</text>
</comment>
<comment type="subcellular location">
    <subcellularLocation>
        <location evidence="5">Secreted</location>
    </subcellularLocation>
</comment>
<comment type="tissue specificity">
    <text evidence="5">Expressed by the venom gland.</text>
</comment>
<comment type="PTM">
    <text evidence="4">Contains 3 disulfide bonds.</text>
</comment>
<comment type="similarity">
    <text evidence="4">Belongs to the scoloptoxin-07 family.</text>
</comment>
<comment type="sequence caution" evidence="4">
    <conflict type="erroneous initiation">
        <sequence resource="EMBL-CDS" id="AFM55014"/>
    </conflict>
    <text>Extended N-terminus.</text>
</comment>
<sequence length="74" mass="8340">MLVFYALLFVSVFSNTVMGATIDMPIPKPILREAIEEIDVNKRADSHYCKEENCPPGKHCPKVPIVCRRGPCCF</sequence>
<feature type="signal peptide" evidence="2">
    <location>
        <begin position="1"/>
        <end position="19"/>
    </location>
</feature>
<feature type="propeptide" id="PRO_0000425481" evidence="1">
    <location>
        <begin position="20"/>
        <end position="41"/>
    </location>
</feature>
<feature type="chain" id="PRO_0000425482" description="Kappa-scoloptoxin(07)-Ssm2e" evidence="1">
    <location>
        <begin position="44"/>
        <end position="74"/>
    </location>
</feature>
<feature type="sequence conflict" description="In Ref. 1; AFM55014." evidence="4" ref="1">
    <original>L</original>
    <variation>I</variation>
    <location>
        <position position="7"/>
    </location>
</feature>
<feature type="sequence conflict" description="In Ref. 1; AFM55014." evidence="4" ref="1">
    <original>S</original>
    <variation>T</variation>
    <location>
        <position position="11"/>
    </location>
</feature>
<feature type="sequence conflict" description="In Ref. 1; AFM55014." evidence="4" ref="1">
    <original>L</original>
    <variation>F</variation>
    <location>
        <position position="31"/>
    </location>
</feature>
<keyword id="KW-0165">Cleavage on pair of basic residues</keyword>
<keyword id="KW-1015">Disulfide bond</keyword>
<keyword id="KW-0872">Ion channel impairing toxin</keyword>
<keyword id="KW-0528">Neurotoxin</keyword>
<keyword id="KW-0632">Potassium channel impairing toxin</keyword>
<keyword id="KW-0964">Secreted</keyword>
<keyword id="KW-0732">Signal</keyword>
<keyword id="KW-0800">Toxin</keyword>
<keyword id="KW-1220">Voltage-gated potassium channel impairing toxin</keyword>
<reference key="1">
    <citation type="journal article" date="2012" name="Mol. Cell. Proteomics">
        <title>Chemical punch packed in venoms makes centipedes excellent predators.</title>
        <authorList>
            <person name="Yang S."/>
            <person name="Liu Z."/>
            <person name="Xiao Y."/>
            <person name="Li Y."/>
            <person name="Rong M."/>
            <person name="Liang S."/>
            <person name="Zhang Z."/>
            <person name="Yu H."/>
            <person name="King G.F."/>
            <person name="Lai R."/>
        </authorList>
    </citation>
    <scope>NUCLEOTIDE SEQUENCE [MRNA]</scope>
    <source>
        <tissue>Venom gland</tissue>
    </source>
</reference>
<proteinExistence type="inferred from homology"/>
<dbReference type="EMBL" id="JQ757067">
    <property type="protein sequence ID" value="AFM55014.1"/>
    <property type="status" value="ALT_INIT"/>
    <property type="molecule type" value="mRNA"/>
</dbReference>
<dbReference type="GO" id="GO:0005576">
    <property type="term" value="C:extracellular region"/>
    <property type="evidence" value="ECO:0007669"/>
    <property type="project" value="UniProtKB-SubCell"/>
</dbReference>
<dbReference type="GO" id="GO:0015459">
    <property type="term" value="F:potassium channel regulator activity"/>
    <property type="evidence" value="ECO:0007669"/>
    <property type="project" value="UniProtKB-KW"/>
</dbReference>
<dbReference type="GO" id="GO:0090729">
    <property type="term" value="F:toxin activity"/>
    <property type="evidence" value="ECO:0007669"/>
    <property type="project" value="UniProtKB-KW"/>
</dbReference>
<accession>I6RA71</accession>
<evidence type="ECO:0000250" key="1">
    <source>
        <dbReference type="UniProtKB" id="I6RA66"/>
    </source>
</evidence>
<evidence type="ECO:0000255" key="2"/>
<evidence type="ECO:0000303" key="3">
    <source>
    </source>
</evidence>
<evidence type="ECO:0000305" key="4"/>
<evidence type="ECO:0000305" key="5">
    <source>
    </source>
</evidence>
<organism>
    <name type="scientific">Scolopendra mutilans</name>
    <name type="common">Chinese red-headed centipede</name>
    <name type="synonym">Scolopendra subspinipes mutilans</name>
    <dbReference type="NCBI Taxonomy" id="2836329"/>
    <lineage>
        <taxon>Eukaryota</taxon>
        <taxon>Metazoa</taxon>
        <taxon>Ecdysozoa</taxon>
        <taxon>Arthropoda</taxon>
        <taxon>Myriapoda</taxon>
        <taxon>Chilopoda</taxon>
        <taxon>Pleurostigmophora</taxon>
        <taxon>Scolopendromorpha</taxon>
        <taxon>Scolopendridae</taxon>
        <taxon>Scolopendra</taxon>
    </lineage>
</organism>